<protein>
    <recommendedName>
        <fullName evidence="1">Chorismate synthase</fullName>
        <shortName evidence="1">CS</shortName>
        <ecNumber evidence="1">4.2.3.5</ecNumber>
    </recommendedName>
    <alternativeName>
        <fullName evidence="1">5-enolpyruvylshikimate-3-phosphate phospholyase</fullName>
    </alternativeName>
</protein>
<comment type="function">
    <text evidence="1">Catalyzes the anti-1,4-elimination of the C-3 phosphate and the C-6 proR hydrogen from 5-enolpyruvylshikimate-3-phosphate (EPSP) to yield chorismate, which is the branch point compound that serves as the starting substrate for the three terminal pathways of aromatic amino acid biosynthesis. This reaction introduces a second double bond into the aromatic ring system.</text>
</comment>
<comment type="catalytic activity">
    <reaction evidence="1">
        <text>5-O-(1-carboxyvinyl)-3-phosphoshikimate = chorismate + phosphate</text>
        <dbReference type="Rhea" id="RHEA:21020"/>
        <dbReference type="ChEBI" id="CHEBI:29748"/>
        <dbReference type="ChEBI" id="CHEBI:43474"/>
        <dbReference type="ChEBI" id="CHEBI:57701"/>
        <dbReference type="EC" id="4.2.3.5"/>
    </reaction>
</comment>
<comment type="cofactor">
    <cofactor evidence="1">
        <name>FMNH2</name>
        <dbReference type="ChEBI" id="CHEBI:57618"/>
    </cofactor>
    <text evidence="1">Reduced FMN (FMNH(2)).</text>
</comment>
<comment type="pathway">
    <text evidence="1">Metabolic intermediate biosynthesis; chorismate biosynthesis; chorismate from D-erythrose 4-phosphate and phosphoenolpyruvate: step 7/7.</text>
</comment>
<comment type="subunit">
    <text evidence="1">Homotetramer.</text>
</comment>
<comment type="similarity">
    <text evidence="1">Belongs to the chorismate synthase family.</text>
</comment>
<name>AROC_PSEPW</name>
<feature type="chain" id="PRO_1000115385" description="Chorismate synthase">
    <location>
        <begin position="1"/>
        <end position="363"/>
    </location>
</feature>
<feature type="binding site" evidence="1">
    <location>
        <position position="48"/>
    </location>
    <ligand>
        <name>NADP(+)</name>
        <dbReference type="ChEBI" id="CHEBI:58349"/>
    </ligand>
</feature>
<feature type="binding site" evidence="1">
    <location>
        <position position="54"/>
    </location>
    <ligand>
        <name>NADP(+)</name>
        <dbReference type="ChEBI" id="CHEBI:58349"/>
    </ligand>
</feature>
<feature type="binding site" evidence="1">
    <location>
        <begin position="125"/>
        <end position="127"/>
    </location>
    <ligand>
        <name>FMN</name>
        <dbReference type="ChEBI" id="CHEBI:58210"/>
    </ligand>
</feature>
<feature type="binding site" evidence="1">
    <location>
        <begin position="237"/>
        <end position="238"/>
    </location>
    <ligand>
        <name>FMN</name>
        <dbReference type="ChEBI" id="CHEBI:58210"/>
    </ligand>
</feature>
<feature type="binding site" evidence="1">
    <location>
        <position position="277"/>
    </location>
    <ligand>
        <name>FMN</name>
        <dbReference type="ChEBI" id="CHEBI:58210"/>
    </ligand>
</feature>
<feature type="binding site" evidence="1">
    <location>
        <begin position="292"/>
        <end position="296"/>
    </location>
    <ligand>
        <name>FMN</name>
        <dbReference type="ChEBI" id="CHEBI:58210"/>
    </ligand>
</feature>
<feature type="binding site" evidence="1">
    <location>
        <position position="318"/>
    </location>
    <ligand>
        <name>FMN</name>
        <dbReference type="ChEBI" id="CHEBI:58210"/>
    </ligand>
</feature>
<gene>
    <name evidence="1" type="primary">aroC</name>
    <name type="ordered locus">PputW619_1438</name>
</gene>
<sequence length="363" mass="38996">MSGNTYGKLFTVTTAGESHGPALVAIVDGCPPGLEISLADLQHDLDRRKPGTSRHTTQRQEPDEVEILSGVFEGRTTGCSIGLLIRNTDQKSKDYSAIKDLFRPAHADYTYHHKYGIRDYRGGGRSSARETAMRVAAGAIAKKYLATQGIQVRGYMSQLGPIEIPFKTWDSVQDNAFFSPDPDKVPELEAYMDQLRRDQDSVGAKITVVAEGVMPGLGEPIFDRLDAELAHALMSINAVKGVEIGAGFASIAQRGTEHRDELTPEGFLSNNAGGILGGISSGQPIVAHLALKPTSSITVPGRSIDVDGNPVDVITKGRHDPCVGIRATPIAEAMMAIVLMDHLLRHRAQNAEVKVATPVLGQL</sequence>
<organism>
    <name type="scientific">Pseudomonas putida (strain W619)</name>
    <dbReference type="NCBI Taxonomy" id="390235"/>
    <lineage>
        <taxon>Bacteria</taxon>
        <taxon>Pseudomonadati</taxon>
        <taxon>Pseudomonadota</taxon>
        <taxon>Gammaproteobacteria</taxon>
        <taxon>Pseudomonadales</taxon>
        <taxon>Pseudomonadaceae</taxon>
        <taxon>Pseudomonas</taxon>
    </lineage>
</organism>
<reference key="1">
    <citation type="submission" date="2008-02" db="EMBL/GenBank/DDBJ databases">
        <title>Complete sequence of Pseudomonas putida W619.</title>
        <authorList>
            <person name="Copeland A."/>
            <person name="Lucas S."/>
            <person name="Lapidus A."/>
            <person name="Barry K."/>
            <person name="Detter J.C."/>
            <person name="Glavina del Rio T."/>
            <person name="Dalin E."/>
            <person name="Tice H."/>
            <person name="Pitluck S."/>
            <person name="Chain P."/>
            <person name="Malfatti S."/>
            <person name="Shin M."/>
            <person name="Vergez L."/>
            <person name="Schmutz J."/>
            <person name="Larimer F."/>
            <person name="Land M."/>
            <person name="Hauser L."/>
            <person name="Kyrpides N."/>
            <person name="Kim E."/>
            <person name="Taghavi S."/>
            <person name="Vangronsveld D."/>
            <person name="van der Lelie D."/>
            <person name="Richardson P."/>
        </authorList>
    </citation>
    <scope>NUCLEOTIDE SEQUENCE [LARGE SCALE GENOMIC DNA]</scope>
    <source>
        <strain>W619</strain>
    </source>
</reference>
<accession>B1J4S1</accession>
<keyword id="KW-0028">Amino-acid biosynthesis</keyword>
<keyword id="KW-0057">Aromatic amino acid biosynthesis</keyword>
<keyword id="KW-0274">FAD</keyword>
<keyword id="KW-0285">Flavoprotein</keyword>
<keyword id="KW-0288">FMN</keyword>
<keyword id="KW-0456">Lyase</keyword>
<keyword id="KW-0521">NADP</keyword>
<dbReference type="EC" id="4.2.3.5" evidence="1"/>
<dbReference type="EMBL" id="CP000949">
    <property type="protein sequence ID" value="ACA71943.1"/>
    <property type="molecule type" value="Genomic_DNA"/>
</dbReference>
<dbReference type="SMR" id="B1J4S1"/>
<dbReference type="STRING" id="390235.PputW619_1438"/>
<dbReference type="KEGG" id="ppw:PputW619_1438"/>
<dbReference type="eggNOG" id="COG0082">
    <property type="taxonomic scope" value="Bacteria"/>
</dbReference>
<dbReference type="HOGENOM" id="CLU_034547_0_2_6"/>
<dbReference type="OrthoDB" id="9771806at2"/>
<dbReference type="UniPathway" id="UPA00053">
    <property type="reaction ID" value="UER00090"/>
</dbReference>
<dbReference type="GO" id="GO:0005829">
    <property type="term" value="C:cytosol"/>
    <property type="evidence" value="ECO:0007669"/>
    <property type="project" value="TreeGrafter"/>
</dbReference>
<dbReference type="GO" id="GO:0004107">
    <property type="term" value="F:chorismate synthase activity"/>
    <property type="evidence" value="ECO:0007669"/>
    <property type="project" value="UniProtKB-UniRule"/>
</dbReference>
<dbReference type="GO" id="GO:0010181">
    <property type="term" value="F:FMN binding"/>
    <property type="evidence" value="ECO:0007669"/>
    <property type="project" value="TreeGrafter"/>
</dbReference>
<dbReference type="GO" id="GO:0008652">
    <property type="term" value="P:amino acid biosynthetic process"/>
    <property type="evidence" value="ECO:0007669"/>
    <property type="project" value="UniProtKB-KW"/>
</dbReference>
<dbReference type="GO" id="GO:0009073">
    <property type="term" value="P:aromatic amino acid family biosynthetic process"/>
    <property type="evidence" value="ECO:0007669"/>
    <property type="project" value="UniProtKB-KW"/>
</dbReference>
<dbReference type="GO" id="GO:0009423">
    <property type="term" value="P:chorismate biosynthetic process"/>
    <property type="evidence" value="ECO:0007669"/>
    <property type="project" value="UniProtKB-UniRule"/>
</dbReference>
<dbReference type="CDD" id="cd07304">
    <property type="entry name" value="Chorismate_synthase"/>
    <property type="match status" value="1"/>
</dbReference>
<dbReference type="FunFam" id="3.60.150.10:FF:000001">
    <property type="entry name" value="Chorismate synthase"/>
    <property type="match status" value="1"/>
</dbReference>
<dbReference type="Gene3D" id="3.60.150.10">
    <property type="entry name" value="Chorismate synthase AroC"/>
    <property type="match status" value="1"/>
</dbReference>
<dbReference type="HAMAP" id="MF_00300">
    <property type="entry name" value="Chorismate_synth"/>
    <property type="match status" value="1"/>
</dbReference>
<dbReference type="InterPro" id="IPR000453">
    <property type="entry name" value="Chorismate_synth"/>
</dbReference>
<dbReference type="InterPro" id="IPR035904">
    <property type="entry name" value="Chorismate_synth_AroC_sf"/>
</dbReference>
<dbReference type="InterPro" id="IPR020541">
    <property type="entry name" value="Chorismate_synthase_CS"/>
</dbReference>
<dbReference type="NCBIfam" id="TIGR00033">
    <property type="entry name" value="aroC"/>
    <property type="match status" value="1"/>
</dbReference>
<dbReference type="NCBIfam" id="NF003793">
    <property type="entry name" value="PRK05382.1"/>
    <property type="match status" value="1"/>
</dbReference>
<dbReference type="PANTHER" id="PTHR21085">
    <property type="entry name" value="CHORISMATE SYNTHASE"/>
    <property type="match status" value="1"/>
</dbReference>
<dbReference type="PANTHER" id="PTHR21085:SF0">
    <property type="entry name" value="CHORISMATE SYNTHASE"/>
    <property type="match status" value="1"/>
</dbReference>
<dbReference type="Pfam" id="PF01264">
    <property type="entry name" value="Chorismate_synt"/>
    <property type="match status" value="1"/>
</dbReference>
<dbReference type="PIRSF" id="PIRSF001456">
    <property type="entry name" value="Chorismate_synth"/>
    <property type="match status" value="1"/>
</dbReference>
<dbReference type="SUPFAM" id="SSF103263">
    <property type="entry name" value="Chorismate synthase, AroC"/>
    <property type="match status" value="1"/>
</dbReference>
<dbReference type="PROSITE" id="PS00787">
    <property type="entry name" value="CHORISMATE_SYNTHASE_1"/>
    <property type="match status" value="1"/>
</dbReference>
<dbReference type="PROSITE" id="PS00788">
    <property type="entry name" value="CHORISMATE_SYNTHASE_2"/>
    <property type="match status" value="1"/>
</dbReference>
<dbReference type="PROSITE" id="PS00789">
    <property type="entry name" value="CHORISMATE_SYNTHASE_3"/>
    <property type="match status" value="1"/>
</dbReference>
<proteinExistence type="inferred from homology"/>
<evidence type="ECO:0000255" key="1">
    <source>
        <dbReference type="HAMAP-Rule" id="MF_00300"/>
    </source>
</evidence>